<protein>
    <recommendedName>
        <fullName evidence="1">Histidinol-phosphate aminotransferase</fullName>
        <ecNumber evidence="1">2.6.1.9</ecNumber>
    </recommendedName>
    <alternativeName>
        <fullName evidence="1">Imidazole acetol-phosphate transaminase</fullName>
    </alternativeName>
</protein>
<keyword id="KW-0028">Amino-acid biosynthesis</keyword>
<keyword id="KW-0032">Aminotransferase</keyword>
<keyword id="KW-0368">Histidine biosynthesis</keyword>
<keyword id="KW-0663">Pyridoxal phosphate</keyword>
<keyword id="KW-0808">Transferase</keyword>
<accession>Q6GBA6</accession>
<evidence type="ECO:0000255" key="1">
    <source>
        <dbReference type="HAMAP-Rule" id="MF_01023"/>
    </source>
</evidence>
<dbReference type="EC" id="2.6.1.9" evidence="1"/>
<dbReference type="EMBL" id="BX571857">
    <property type="protein sequence ID" value="CAG42465.1"/>
    <property type="molecule type" value="Genomic_DNA"/>
</dbReference>
<dbReference type="RefSeq" id="WP_000663032.1">
    <property type="nucleotide sequence ID" value="NC_002953.3"/>
</dbReference>
<dbReference type="SMR" id="Q6GBA6"/>
<dbReference type="KEGG" id="sas:SAS0689"/>
<dbReference type="HOGENOM" id="CLU_017584_3_3_9"/>
<dbReference type="UniPathway" id="UPA00031">
    <property type="reaction ID" value="UER00012"/>
</dbReference>
<dbReference type="GO" id="GO:0004400">
    <property type="term" value="F:histidinol-phosphate transaminase activity"/>
    <property type="evidence" value="ECO:0007669"/>
    <property type="project" value="UniProtKB-UniRule"/>
</dbReference>
<dbReference type="GO" id="GO:0030170">
    <property type="term" value="F:pyridoxal phosphate binding"/>
    <property type="evidence" value="ECO:0007669"/>
    <property type="project" value="InterPro"/>
</dbReference>
<dbReference type="GO" id="GO:0000105">
    <property type="term" value="P:L-histidine biosynthetic process"/>
    <property type="evidence" value="ECO:0007669"/>
    <property type="project" value="UniProtKB-UniRule"/>
</dbReference>
<dbReference type="CDD" id="cd00609">
    <property type="entry name" value="AAT_like"/>
    <property type="match status" value="1"/>
</dbReference>
<dbReference type="Gene3D" id="3.90.1150.10">
    <property type="entry name" value="Aspartate Aminotransferase, domain 1"/>
    <property type="match status" value="1"/>
</dbReference>
<dbReference type="Gene3D" id="3.40.640.10">
    <property type="entry name" value="Type I PLP-dependent aspartate aminotransferase-like (Major domain)"/>
    <property type="match status" value="1"/>
</dbReference>
<dbReference type="HAMAP" id="MF_01023">
    <property type="entry name" value="HisC_aminotrans_2"/>
    <property type="match status" value="1"/>
</dbReference>
<dbReference type="InterPro" id="IPR001917">
    <property type="entry name" value="Aminotrans_II_pyridoxalP_BS"/>
</dbReference>
<dbReference type="InterPro" id="IPR004839">
    <property type="entry name" value="Aminotransferase_I/II_large"/>
</dbReference>
<dbReference type="InterPro" id="IPR005861">
    <property type="entry name" value="HisP_aminotrans"/>
</dbReference>
<dbReference type="InterPro" id="IPR050106">
    <property type="entry name" value="HistidinolP_aminotransfase"/>
</dbReference>
<dbReference type="InterPro" id="IPR015424">
    <property type="entry name" value="PyrdxlP-dep_Trfase"/>
</dbReference>
<dbReference type="InterPro" id="IPR015421">
    <property type="entry name" value="PyrdxlP-dep_Trfase_major"/>
</dbReference>
<dbReference type="InterPro" id="IPR015422">
    <property type="entry name" value="PyrdxlP-dep_Trfase_small"/>
</dbReference>
<dbReference type="NCBIfam" id="TIGR01141">
    <property type="entry name" value="hisC"/>
    <property type="match status" value="1"/>
</dbReference>
<dbReference type="PANTHER" id="PTHR43643:SF3">
    <property type="entry name" value="HISTIDINOL-PHOSPHATE AMINOTRANSFERASE"/>
    <property type="match status" value="1"/>
</dbReference>
<dbReference type="PANTHER" id="PTHR43643">
    <property type="entry name" value="HISTIDINOL-PHOSPHATE AMINOTRANSFERASE 2"/>
    <property type="match status" value="1"/>
</dbReference>
<dbReference type="Pfam" id="PF00155">
    <property type="entry name" value="Aminotran_1_2"/>
    <property type="match status" value="1"/>
</dbReference>
<dbReference type="SUPFAM" id="SSF53383">
    <property type="entry name" value="PLP-dependent transferases"/>
    <property type="match status" value="1"/>
</dbReference>
<dbReference type="PROSITE" id="PS00599">
    <property type="entry name" value="AA_TRANSFER_CLASS_2"/>
    <property type="match status" value="1"/>
</dbReference>
<comment type="catalytic activity">
    <reaction evidence="1">
        <text>L-histidinol phosphate + 2-oxoglutarate = 3-(imidazol-4-yl)-2-oxopropyl phosphate + L-glutamate</text>
        <dbReference type="Rhea" id="RHEA:23744"/>
        <dbReference type="ChEBI" id="CHEBI:16810"/>
        <dbReference type="ChEBI" id="CHEBI:29985"/>
        <dbReference type="ChEBI" id="CHEBI:57766"/>
        <dbReference type="ChEBI" id="CHEBI:57980"/>
        <dbReference type="EC" id="2.6.1.9"/>
    </reaction>
</comment>
<comment type="cofactor">
    <cofactor evidence="1">
        <name>pyridoxal 5'-phosphate</name>
        <dbReference type="ChEBI" id="CHEBI:597326"/>
    </cofactor>
</comment>
<comment type="pathway">
    <text evidence="1">Amino-acid biosynthesis; L-histidine biosynthesis; L-histidine from 5-phospho-alpha-D-ribose 1-diphosphate: step 7/9.</text>
</comment>
<comment type="subunit">
    <text evidence="1">Homodimer.</text>
</comment>
<comment type="similarity">
    <text evidence="1">Belongs to the class-II pyridoxal-phosphate-dependent aminotransferase family. Histidinol-phosphate aminotransferase subfamily.</text>
</comment>
<gene>
    <name evidence="1" type="primary">hisC</name>
    <name type="ordered locus">SAS0689</name>
</gene>
<feature type="chain" id="PRO_0000153453" description="Histidinol-phosphate aminotransferase">
    <location>
        <begin position="1"/>
        <end position="352"/>
    </location>
</feature>
<feature type="modified residue" description="N6-(pyridoxal phosphate)lysine" evidence="1">
    <location>
        <position position="221"/>
    </location>
</feature>
<sequence>MKEQLNQLSAYQPGLSPRALKEKYGIEGDLYKLASNENLYGPSPKVKEAISAHLDELYYYPETGSPTLKAAISKHLNVDQSRILFGAGLDEVILMISRAVLTPGDTIVTSEATFGQYYHNAIVESANVIQVPLKDGGFDLEGILKEVNEDTSLVWLCNPNNPTGTYFNHESLDSFLSQVPPHVPVIIDEAYFEFVTEEDYPDTLALQQKYDNAFLLRTFSKAYGLAGLRVGYVVASEHAIEKWNIIRPPFNVTRISEYAAVAALEDQQYLKEVTHKNSVERERFYQLPQSEYFLPSQTNFIFVKTKRVNELYEALLNVGCITRPFPTGVRITIGFKEQNDKMLEVLSNFKYE</sequence>
<proteinExistence type="inferred from homology"/>
<name>HIS8_STAAS</name>
<organism>
    <name type="scientific">Staphylococcus aureus (strain MSSA476)</name>
    <dbReference type="NCBI Taxonomy" id="282459"/>
    <lineage>
        <taxon>Bacteria</taxon>
        <taxon>Bacillati</taxon>
        <taxon>Bacillota</taxon>
        <taxon>Bacilli</taxon>
        <taxon>Bacillales</taxon>
        <taxon>Staphylococcaceae</taxon>
        <taxon>Staphylococcus</taxon>
    </lineage>
</organism>
<reference key="1">
    <citation type="journal article" date="2004" name="Proc. Natl. Acad. Sci. U.S.A.">
        <title>Complete genomes of two clinical Staphylococcus aureus strains: evidence for the rapid evolution of virulence and drug resistance.</title>
        <authorList>
            <person name="Holden M.T.G."/>
            <person name="Feil E.J."/>
            <person name="Lindsay J.A."/>
            <person name="Peacock S.J."/>
            <person name="Day N.P.J."/>
            <person name="Enright M.C."/>
            <person name="Foster T.J."/>
            <person name="Moore C.E."/>
            <person name="Hurst L."/>
            <person name="Atkin R."/>
            <person name="Barron A."/>
            <person name="Bason N."/>
            <person name="Bentley S.D."/>
            <person name="Chillingworth C."/>
            <person name="Chillingworth T."/>
            <person name="Churcher C."/>
            <person name="Clark L."/>
            <person name="Corton C."/>
            <person name="Cronin A."/>
            <person name="Doggett J."/>
            <person name="Dowd L."/>
            <person name="Feltwell T."/>
            <person name="Hance Z."/>
            <person name="Harris B."/>
            <person name="Hauser H."/>
            <person name="Holroyd S."/>
            <person name="Jagels K."/>
            <person name="James K.D."/>
            <person name="Lennard N."/>
            <person name="Line A."/>
            <person name="Mayes R."/>
            <person name="Moule S."/>
            <person name="Mungall K."/>
            <person name="Ormond D."/>
            <person name="Quail M.A."/>
            <person name="Rabbinowitsch E."/>
            <person name="Rutherford K.M."/>
            <person name="Sanders M."/>
            <person name="Sharp S."/>
            <person name="Simmonds M."/>
            <person name="Stevens K."/>
            <person name="Whitehead S."/>
            <person name="Barrell B.G."/>
            <person name="Spratt B.G."/>
            <person name="Parkhill J."/>
        </authorList>
    </citation>
    <scope>NUCLEOTIDE SEQUENCE [LARGE SCALE GENOMIC DNA]</scope>
    <source>
        <strain>MSSA476</strain>
    </source>
</reference>